<accession>Q1H4P4</accession>
<name>RPOB_METFK</name>
<reference key="1">
    <citation type="submission" date="2006-03" db="EMBL/GenBank/DDBJ databases">
        <title>Complete sequence of Methylobacillus flagellatus KT.</title>
        <authorList>
            <consortium name="US DOE Joint Genome Institute"/>
            <person name="Copeland A."/>
            <person name="Lucas S."/>
            <person name="Lapidus A."/>
            <person name="Barry K."/>
            <person name="Detter J.C."/>
            <person name="Glavina del Rio T."/>
            <person name="Hammon N."/>
            <person name="Israni S."/>
            <person name="Dalin E."/>
            <person name="Tice H."/>
            <person name="Pitluck S."/>
            <person name="Brettin T."/>
            <person name="Bruce D."/>
            <person name="Han C."/>
            <person name="Tapia R."/>
            <person name="Saunders E."/>
            <person name="Gilna P."/>
            <person name="Schmutz J."/>
            <person name="Larimer F."/>
            <person name="Land M."/>
            <person name="Kyrpides N."/>
            <person name="Anderson I."/>
            <person name="Richardson P."/>
        </authorList>
    </citation>
    <scope>NUCLEOTIDE SEQUENCE [LARGE SCALE GENOMIC DNA]</scope>
    <source>
        <strain>ATCC 51484 / DSM 6875 / VKM B-1610 / KT</strain>
    </source>
</reference>
<gene>
    <name evidence="1" type="primary">rpoB</name>
    <name type="ordered locus">Mfla_0272</name>
</gene>
<keyword id="KW-0240">DNA-directed RNA polymerase</keyword>
<keyword id="KW-0548">Nucleotidyltransferase</keyword>
<keyword id="KW-1185">Reference proteome</keyword>
<keyword id="KW-0804">Transcription</keyword>
<keyword id="KW-0808">Transferase</keyword>
<protein>
    <recommendedName>
        <fullName evidence="1">DNA-directed RNA polymerase subunit beta</fullName>
        <shortName evidence="1">RNAP subunit beta</shortName>
        <ecNumber evidence="1">2.7.7.6</ecNumber>
    </recommendedName>
    <alternativeName>
        <fullName evidence="1">RNA polymerase subunit beta</fullName>
    </alternativeName>
    <alternativeName>
        <fullName evidence="1">Transcriptase subunit beta</fullName>
    </alternativeName>
</protein>
<comment type="function">
    <text evidence="1">DNA-dependent RNA polymerase catalyzes the transcription of DNA into RNA using the four ribonucleoside triphosphates as substrates.</text>
</comment>
<comment type="catalytic activity">
    <reaction evidence="1">
        <text>RNA(n) + a ribonucleoside 5'-triphosphate = RNA(n+1) + diphosphate</text>
        <dbReference type="Rhea" id="RHEA:21248"/>
        <dbReference type="Rhea" id="RHEA-COMP:14527"/>
        <dbReference type="Rhea" id="RHEA-COMP:17342"/>
        <dbReference type="ChEBI" id="CHEBI:33019"/>
        <dbReference type="ChEBI" id="CHEBI:61557"/>
        <dbReference type="ChEBI" id="CHEBI:140395"/>
        <dbReference type="EC" id="2.7.7.6"/>
    </reaction>
</comment>
<comment type="subunit">
    <text evidence="1">The RNAP catalytic core consists of 2 alpha, 1 beta, 1 beta' and 1 omega subunit. When a sigma factor is associated with the core the holoenzyme is formed, which can initiate transcription.</text>
</comment>
<comment type="similarity">
    <text evidence="1">Belongs to the RNA polymerase beta chain family.</text>
</comment>
<sequence length="1390" mass="155365">MSYSFTEKKRLRKSFAKRESVQEVPYLLAMQLESYAAFLQADTPADKRTDTGLQAAFSSVFPIVSHSGNARLDFVSYNLGQEPFDVKECQQRGLTYAAPLRVKVRLTIMDKEASKPTVKEVKEQEVYMGELPLMTENGSFVINGTERVIVSQLHRSPGVFFEHDRGKTHSSGKLLFSARIIPYRGSWLDFEFDPKDYLYFRVDRRRKMPVTILLKALGFTPEQILETFYDFDTFHIAKKGVQFELVPERLRGEVAKFDILDKDGKVIVAKDKRITVKHIRDMEKSGISKITVPEEFLLGRSLAAGIVDKTTGEIIANANDEVTESLLDKLREADVNKINTLYANDLDHGDYISQTLRIDEIPDEYSARVAIYRMMRPGEPPTEEAVQALFEGLFFNEDRYDLSAVGRMKFNRRAFPEKIEERTAAWLRRFYEKVGPQGAEGPGTLSNDDILAVIAVLIELRNGRGEIDDIDHLGNRRIRSVGELAENQFRAGLVRVERAVKERLSQAESDNLMPHDLINAKPVSSAIREFFGSSQPSQFMDQTNPLSEITHKRRVSALGPGGLTRERAGFEVRDVHSTHYGRVCPIETPEGPNIGLINSLALYSRTNQYGFLETPYRRVADNKVSDQIDYLSAIEESQYMIAQANSELDQDGRFKEDLVSARYHNEFTMAQPDRVQYMDVAPGQIVSVAASLIPFLEHDDANRALMGANMQRQAVPCLRAEKALVGTGIERTVAVDSGTVVTARRGGVVDYVDSSRIVVRVHDEEAAAGEVGVDIYNLIKYTRSNQNTNINQRPLVNVGDVLARGDVIADGASTDMGELALGQNMLVAFMPWNGYNFEDSILISERVVADDRYTSIHIEELSVVARDTKLGAEEITRDISNLSERMLGRLDESGIIYIGAEVEAGDVLVGKVTPKGETQLTPEEKLLRAIFGEKASDVKDTSLRVPSGMSGTVIDVQVFTREGIERDARAQQIIDDQLADYKQDLADQMRIVEDDAFGRIRRLIEGKVATGGPQKLKKGETVTAEYLDGLARYDWFDIRLSDEDVARQLEQLRDSLSQARIEFDSKFEEKKRKLTQGDELPPGVQKMVKVYLAVKRRIQPGDKMAGRHGNKGVVSKIVPIEDMPHMADGTPMDIVLNPLGVPSRMNIGQILEVHLGWAAKGLGIRIGNMLQAQAKAAELRDFLEQVYNKSNGKSEDIASLSDDEVIDLAKNLRSGVPFATPVFDGATEADIKAMLDLAFPDDDPRTQQLQFASGKTQVTLFDGRTGDAFERPVTVGYMHVLKLHHLVDDKMHARSTGPYSLVTQQPLGGKAQFGGQRFGEMEVWALEAYGASYTLQEMLTVKSDDVTGRTKVYENIVKGEHKIDAGMPESFNVLVKEIRSLAIDIDLDRN</sequence>
<proteinExistence type="inferred from homology"/>
<dbReference type="EC" id="2.7.7.6" evidence="1"/>
<dbReference type="EMBL" id="CP000284">
    <property type="protein sequence ID" value="ABE48543.1"/>
    <property type="molecule type" value="Genomic_DNA"/>
</dbReference>
<dbReference type="RefSeq" id="WP_011478640.1">
    <property type="nucleotide sequence ID" value="NC_007947.1"/>
</dbReference>
<dbReference type="SMR" id="Q1H4P4"/>
<dbReference type="STRING" id="265072.Mfla_0272"/>
<dbReference type="KEGG" id="mfa:Mfla_0272"/>
<dbReference type="eggNOG" id="COG0085">
    <property type="taxonomic scope" value="Bacteria"/>
</dbReference>
<dbReference type="HOGENOM" id="CLU_000524_4_0_4"/>
<dbReference type="OrthoDB" id="9803954at2"/>
<dbReference type="Proteomes" id="UP000002440">
    <property type="component" value="Chromosome"/>
</dbReference>
<dbReference type="GO" id="GO:0000428">
    <property type="term" value="C:DNA-directed RNA polymerase complex"/>
    <property type="evidence" value="ECO:0007669"/>
    <property type="project" value="UniProtKB-KW"/>
</dbReference>
<dbReference type="GO" id="GO:0003677">
    <property type="term" value="F:DNA binding"/>
    <property type="evidence" value="ECO:0007669"/>
    <property type="project" value="UniProtKB-UniRule"/>
</dbReference>
<dbReference type="GO" id="GO:0003899">
    <property type="term" value="F:DNA-directed RNA polymerase activity"/>
    <property type="evidence" value="ECO:0007669"/>
    <property type="project" value="UniProtKB-UniRule"/>
</dbReference>
<dbReference type="GO" id="GO:0032549">
    <property type="term" value="F:ribonucleoside binding"/>
    <property type="evidence" value="ECO:0007669"/>
    <property type="project" value="InterPro"/>
</dbReference>
<dbReference type="GO" id="GO:0006351">
    <property type="term" value="P:DNA-templated transcription"/>
    <property type="evidence" value="ECO:0007669"/>
    <property type="project" value="UniProtKB-UniRule"/>
</dbReference>
<dbReference type="CDD" id="cd00653">
    <property type="entry name" value="RNA_pol_B_RPB2"/>
    <property type="match status" value="1"/>
</dbReference>
<dbReference type="FunFam" id="2.40.50.100:FF:000006">
    <property type="entry name" value="DNA-directed RNA polymerase subunit beta"/>
    <property type="match status" value="1"/>
</dbReference>
<dbReference type="FunFam" id="2.40.50.150:FF:000001">
    <property type="entry name" value="DNA-directed RNA polymerase subunit beta"/>
    <property type="match status" value="1"/>
</dbReference>
<dbReference type="FunFam" id="3.90.1800.10:FF:000001">
    <property type="entry name" value="DNA-directed RNA polymerase subunit beta"/>
    <property type="match status" value="1"/>
</dbReference>
<dbReference type="Gene3D" id="2.40.50.100">
    <property type="match status" value="1"/>
</dbReference>
<dbReference type="Gene3D" id="2.40.50.150">
    <property type="match status" value="1"/>
</dbReference>
<dbReference type="Gene3D" id="3.90.1100.10">
    <property type="match status" value="2"/>
</dbReference>
<dbReference type="Gene3D" id="2.30.150.10">
    <property type="entry name" value="DNA-directed RNA polymerase, beta subunit, external 1 domain"/>
    <property type="match status" value="1"/>
</dbReference>
<dbReference type="Gene3D" id="2.40.270.10">
    <property type="entry name" value="DNA-directed RNA polymerase, subunit 2, domain 6"/>
    <property type="match status" value="1"/>
</dbReference>
<dbReference type="Gene3D" id="3.90.1800.10">
    <property type="entry name" value="RNA polymerase alpha subunit dimerisation domain"/>
    <property type="match status" value="1"/>
</dbReference>
<dbReference type="Gene3D" id="3.90.1110.10">
    <property type="entry name" value="RNA polymerase Rpb2, domain 2"/>
    <property type="match status" value="1"/>
</dbReference>
<dbReference type="HAMAP" id="MF_01321">
    <property type="entry name" value="RNApol_bact_RpoB"/>
    <property type="match status" value="1"/>
</dbReference>
<dbReference type="InterPro" id="IPR042107">
    <property type="entry name" value="DNA-dir_RNA_pol_bsu_ext_1_sf"/>
</dbReference>
<dbReference type="InterPro" id="IPR019462">
    <property type="entry name" value="DNA-dir_RNA_pol_bsu_external_1"/>
</dbReference>
<dbReference type="InterPro" id="IPR015712">
    <property type="entry name" value="DNA-dir_RNA_pol_su2"/>
</dbReference>
<dbReference type="InterPro" id="IPR007120">
    <property type="entry name" value="DNA-dir_RNAP_su2_dom"/>
</dbReference>
<dbReference type="InterPro" id="IPR037033">
    <property type="entry name" value="DNA-dir_RNAP_su2_hyb_sf"/>
</dbReference>
<dbReference type="InterPro" id="IPR010243">
    <property type="entry name" value="RNA_pol_bsu_bac"/>
</dbReference>
<dbReference type="InterPro" id="IPR007121">
    <property type="entry name" value="RNA_pol_bsu_CS"/>
</dbReference>
<dbReference type="InterPro" id="IPR007644">
    <property type="entry name" value="RNA_pol_bsu_protrusion"/>
</dbReference>
<dbReference type="InterPro" id="IPR007642">
    <property type="entry name" value="RNA_pol_Rpb2_2"/>
</dbReference>
<dbReference type="InterPro" id="IPR037034">
    <property type="entry name" value="RNA_pol_Rpb2_2_sf"/>
</dbReference>
<dbReference type="InterPro" id="IPR007645">
    <property type="entry name" value="RNA_pol_Rpb2_3"/>
</dbReference>
<dbReference type="InterPro" id="IPR007641">
    <property type="entry name" value="RNA_pol_Rpb2_7"/>
</dbReference>
<dbReference type="InterPro" id="IPR014724">
    <property type="entry name" value="RNA_pol_RPB2_OB-fold"/>
</dbReference>
<dbReference type="NCBIfam" id="NF001616">
    <property type="entry name" value="PRK00405.1"/>
    <property type="match status" value="1"/>
</dbReference>
<dbReference type="NCBIfam" id="TIGR02013">
    <property type="entry name" value="rpoB"/>
    <property type="match status" value="1"/>
</dbReference>
<dbReference type="PANTHER" id="PTHR20856">
    <property type="entry name" value="DNA-DIRECTED RNA POLYMERASE I SUBUNIT 2"/>
    <property type="match status" value="1"/>
</dbReference>
<dbReference type="Pfam" id="PF04563">
    <property type="entry name" value="RNA_pol_Rpb2_1"/>
    <property type="match status" value="1"/>
</dbReference>
<dbReference type="Pfam" id="PF04561">
    <property type="entry name" value="RNA_pol_Rpb2_2"/>
    <property type="match status" value="2"/>
</dbReference>
<dbReference type="Pfam" id="PF04565">
    <property type="entry name" value="RNA_pol_Rpb2_3"/>
    <property type="match status" value="1"/>
</dbReference>
<dbReference type="Pfam" id="PF10385">
    <property type="entry name" value="RNA_pol_Rpb2_45"/>
    <property type="match status" value="1"/>
</dbReference>
<dbReference type="Pfam" id="PF00562">
    <property type="entry name" value="RNA_pol_Rpb2_6"/>
    <property type="match status" value="1"/>
</dbReference>
<dbReference type="Pfam" id="PF04560">
    <property type="entry name" value="RNA_pol_Rpb2_7"/>
    <property type="match status" value="1"/>
</dbReference>
<dbReference type="SUPFAM" id="SSF64484">
    <property type="entry name" value="beta and beta-prime subunits of DNA dependent RNA-polymerase"/>
    <property type="match status" value="1"/>
</dbReference>
<dbReference type="PROSITE" id="PS01166">
    <property type="entry name" value="RNA_POL_BETA"/>
    <property type="match status" value="1"/>
</dbReference>
<evidence type="ECO:0000255" key="1">
    <source>
        <dbReference type="HAMAP-Rule" id="MF_01321"/>
    </source>
</evidence>
<feature type="chain" id="PRO_0000300347" description="DNA-directed RNA polymerase subunit beta">
    <location>
        <begin position="1"/>
        <end position="1390"/>
    </location>
</feature>
<organism>
    <name type="scientific">Methylobacillus flagellatus (strain ATCC 51484 / DSM 6875 / VKM B-1610 / KT)</name>
    <dbReference type="NCBI Taxonomy" id="265072"/>
    <lineage>
        <taxon>Bacteria</taxon>
        <taxon>Pseudomonadati</taxon>
        <taxon>Pseudomonadota</taxon>
        <taxon>Betaproteobacteria</taxon>
        <taxon>Nitrosomonadales</taxon>
        <taxon>Methylophilaceae</taxon>
        <taxon>Methylobacillus</taxon>
    </lineage>
</organism>